<organism>
    <name type="scientific">Bacillus cereus (strain 03BB102)</name>
    <dbReference type="NCBI Taxonomy" id="572264"/>
    <lineage>
        <taxon>Bacteria</taxon>
        <taxon>Bacillati</taxon>
        <taxon>Bacillota</taxon>
        <taxon>Bacilli</taxon>
        <taxon>Bacillales</taxon>
        <taxon>Bacillaceae</taxon>
        <taxon>Bacillus</taxon>
        <taxon>Bacillus cereus group</taxon>
    </lineage>
</organism>
<gene>
    <name evidence="1" type="primary">acpP</name>
    <name type="ordered locus">BCA_3950</name>
</gene>
<comment type="function">
    <text evidence="1">Carrier of the growing fatty acid chain in fatty acid biosynthesis.</text>
</comment>
<comment type="pathway">
    <text evidence="1">Lipid metabolism; fatty acid biosynthesis.</text>
</comment>
<comment type="subcellular location">
    <subcellularLocation>
        <location evidence="1">Cytoplasm</location>
    </subcellularLocation>
</comment>
<comment type="PTM">
    <text evidence="1">4'-phosphopantetheine is transferred from CoA to a specific serine of apo-ACP by AcpS. This modification is essential for activity because fatty acids are bound in thioester linkage to the sulfhydryl of the prosthetic group.</text>
</comment>
<comment type="similarity">
    <text evidence="1">Belongs to the acyl carrier protein (ACP) family.</text>
</comment>
<dbReference type="EMBL" id="CP001407">
    <property type="protein sequence ID" value="ACO30440.1"/>
    <property type="molecule type" value="Genomic_DNA"/>
</dbReference>
<dbReference type="RefSeq" id="WP_000786062.1">
    <property type="nucleotide sequence ID" value="NZ_CP009318.1"/>
</dbReference>
<dbReference type="SMR" id="C1EP74"/>
<dbReference type="GeneID" id="93007262"/>
<dbReference type="KEGG" id="bcx:BCA_3950"/>
<dbReference type="PATRIC" id="fig|572264.18.peg.3906"/>
<dbReference type="UniPathway" id="UPA00094"/>
<dbReference type="Proteomes" id="UP000002210">
    <property type="component" value="Chromosome"/>
</dbReference>
<dbReference type="GO" id="GO:0005829">
    <property type="term" value="C:cytosol"/>
    <property type="evidence" value="ECO:0007669"/>
    <property type="project" value="TreeGrafter"/>
</dbReference>
<dbReference type="GO" id="GO:0016020">
    <property type="term" value="C:membrane"/>
    <property type="evidence" value="ECO:0007669"/>
    <property type="project" value="GOC"/>
</dbReference>
<dbReference type="GO" id="GO:0000035">
    <property type="term" value="F:acyl binding"/>
    <property type="evidence" value="ECO:0007669"/>
    <property type="project" value="TreeGrafter"/>
</dbReference>
<dbReference type="GO" id="GO:0000036">
    <property type="term" value="F:acyl carrier activity"/>
    <property type="evidence" value="ECO:0007669"/>
    <property type="project" value="UniProtKB-UniRule"/>
</dbReference>
<dbReference type="GO" id="GO:0009245">
    <property type="term" value="P:lipid A biosynthetic process"/>
    <property type="evidence" value="ECO:0007669"/>
    <property type="project" value="TreeGrafter"/>
</dbReference>
<dbReference type="FunFam" id="1.10.1200.10:FF:000001">
    <property type="entry name" value="Acyl carrier protein"/>
    <property type="match status" value="1"/>
</dbReference>
<dbReference type="Gene3D" id="1.10.1200.10">
    <property type="entry name" value="ACP-like"/>
    <property type="match status" value="1"/>
</dbReference>
<dbReference type="HAMAP" id="MF_01217">
    <property type="entry name" value="Acyl_carrier"/>
    <property type="match status" value="1"/>
</dbReference>
<dbReference type="InterPro" id="IPR003231">
    <property type="entry name" value="ACP"/>
</dbReference>
<dbReference type="InterPro" id="IPR036736">
    <property type="entry name" value="ACP-like_sf"/>
</dbReference>
<dbReference type="InterPro" id="IPR009081">
    <property type="entry name" value="PP-bd_ACP"/>
</dbReference>
<dbReference type="InterPro" id="IPR006162">
    <property type="entry name" value="Ppantetheine_attach_site"/>
</dbReference>
<dbReference type="NCBIfam" id="TIGR00517">
    <property type="entry name" value="acyl_carrier"/>
    <property type="match status" value="1"/>
</dbReference>
<dbReference type="NCBIfam" id="NF002148">
    <property type="entry name" value="PRK00982.1-2"/>
    <property type="match status" value="1"/>
</dbReference>
<dbReference type="NCBIfam" id="NF002149">
    <property type="entry name" value="PRK00982.1-3"/>
    <property type="match status" value="1"/>
</dbReference>
<dbReference type="NCBIfam" id="NF002150">
    <property type="entry name" value="PRK00982.1-4"/>
    <property type="match status" value="1"/>
</dbReference>
<dbReference type="NCBIfam" id="NF002151">
    <property type="entry name" value="PRK00982.1-5"/>
    <property type="match status" value="1"/>
</dbReference>
<dbReference type="PANTHER" id="PTHR20863">
    <property type="entry name" value="ACYL CARRIER PROTEIN"/>
    <property type="match status" value="1"/>
</dbReference>
<dbReference type="PANTHER" id="PTHR20863:SF76">
    <property type="entry name" value="CARRIER DOMAIN-CONTAINING PROTEIN"/>
    <property type="match status" value="1"/>
</dbReference>
<dbReference type="Pfam" id="PF00550">
    <property type="entry name" value="PP-binding"/>
    <property type="match status" value="1"/>
</dbReference>
<dbReference type="SUPFAM" id="SSF47336">
    <property type="entry name" value="ACP-like"/>
    <property type="match status" value="1"/>
</dbReference>
<dbReference type="PROSITE" id="PS50075">
    <property type="entry name" value="CARRIER"/>
    <property type="match status" value="1"/>
</dbReference>
<dbReference type="PROSITE" id="PS00012">
    <property type="entry name" value="PHOSPHOPANTETHEINE"/>
    <property type="match status" value="1"/>
</dbReference>
<name>ACP_BACC3</name>
<accession>C1EP74</accession>
<keyword id="KW-0963">Cytoplasm</keyword>
<keyword id="KW-0275">Fatty acid biosynthesis</keyword>
<keyword id="KW-0276">Fatty acid metabolism</keyword>
<keyword id="KW-0444">Lipid biosynthesis</keyword>
<keyword id="KW-0443">Lipid metabolism</keyword>
<keyword id="KW-0596">Phosphopantetheine</keyword>
<keyword id="KW-0597">Phosphoprotein</keyword>
<reference key="1">
    <citation type="submission" date="2009-02" db="EMBL/GenBank/DDBJ databases">
        <title>Genome sequence of Bacillus cereus 03BB102.</title>
        <authorList>
            <person name="Dodson R.J."/>
            <person name="Jackson P."/>
            <person name="Munk A.C."/>
            <person name="Brettin T."/>
            <person name="Bruce D."/>
            <person name="Detter C."/>
            <person name="Tapia R."/>
            <person name="Han C."/>
            <person name="Sutton G."/>
            <person name="Sims D."/>
        </authorList>
    </citation>
    <scope>NUCLEOTIDE SEQUENCE [LARGE SCALE GENOMIC DNA]</scope>
    <source>
        <strain>03BB102</strain>
    </source>
</reference>
<protein>
    <recommendedName>
        <fullName evidence="1">Acyl carrier protein</fullName>
        <shortName evidence="1">ACP</shortName>
    </recommendedName>
</protein>
<evidence type="ECO:0000255" key="1">
    <source>
        <dbReference type="HAMAP-Rule" id="MF_01217"/>
    </source>
</evidence>
<evidence type="ECO:0000255" key="2">
    <source>
        <dbReference type="PROSITE-ProRule" id="PRU00258"/>
    </source>
</evidence>
<sequence>MADVLERVTKIIVDRLGVEETEVVPAASFKEDLGADSLDVVELVMQLEDEFEMEISDEDAEKIATVGDAVTYIESHL</sequence>
<feature type="chain" id="PRO_1000164770" description="Acyl carrier protein">
    <location>
        <begin position="1"/>
        <end position="77"/>
    </location>
</feature>
<feature type="domain" description="Carrier" evidence="2">
    <location>
        <begin position="2"/>
        <end position="77"/>
    </location>
</feature>
<feature type="modified residue" description="O-(pantetheine 4'-phosphoryl)serine" evidence="2">
    <location>
        <position position="37"/>
    </location>
</feature>
<proteinExistence type="inferred from homology"/>